<gene>
    <name evidence="1" type="primary">pxpA</name>
    <name type="ordered locus">BCAH820_3100</name>
</gene>
<proteinExistence type="inferred from homology"/>
<organism>
    <name type="scientific">Bacillus cereus (strain AH820)</name>
    <dbReference type="NCBI Taxonomy" id="405535"/>
    <lineage>
        <taxon>Bacteria</taxon>
        <taxon>Bacillati</taxon>
        <taxon>Bacillota</taxon>
        <taxon>Bacilli</taxon>
        <taxon>Bacillales</taxon>
        <taxon>Bacillaceae</taxon>
        <taxon>Bacillus</taxon>
        <taxon>Bacillus cereus group</taxon>
    </lineage>
</organism>
<feature type="chain" id="PRO_1000132038" description="5-oxoprolinase subunit A">
    <location>
        <begin position="1"/>
        <end position="253"/>
    </location>
</feature>
<name>PXPA_BACC0</name>
<protein>
    <recommendedName>
        <fullName evidence="1">5-oxoprolinase subunit A</fullName>
        <shortName evidence="1">5-OPase subunit A</shortName>
        <ecNumber evidence="1">3.5.2.9</ecNumber>
    </recommendedName>
    <alternativeName>
        <fullName evidence="1">5-oxoprolinase (ATP-hydrolyzing) subunit A</fullName>
    </alternativeName>
</protein>
<evidence type="ECO:0000255" key="1">
    <source>
        <dbReference type="HAMAP-Rule" id="MF_00691"/>
    </source>
</evidence>
<sequence length="253" mass="27705">MTTIDLNCDLGESFGAYKMGNDDEILPFVSSINVACGFHAGDPSVMRQTVEKAMQHNVAIGAHPGFPDLIGFGRRNMNVSANEVYDYVLYQIGALDAFVKAAGGKMQHVKPHGALYNMAATNPEIADAIAKAIYHMNSSLSLYGLANSEAFIQAAEKYNITLVQEAFADRTYKQDGTLTSRTEENALIKNEDEAINQVLQMVKEGYVNSVNGEKVAVQAQTICLHGDGEKAVQFARKIYRIFERNKISICAPK</sequence>
<comment type="function">
    <text evidence="1">Catalyzes the cleavage of 5-oxoproline to form L-glutamate coupled to the hydrolysis of ATP to ADP and inorganic phosphate.</text>
</comment>
<comment type="catalytic activity">
    <reaction evidence="1">
        <text>5-oxo-L-proline + ATP + 2 H2O = L-glutamate + ADP + phosphate + H(+)</text>
        <dbReference type="Rhea" id="RHEA:10348"/>
        <dbReference type="ChEBI" id="CHEBI:15377"/>
        <dbReference type="ChEBI" id="CHEBI:15378"/>
        <dbReference type="ChEBI" id="CHEBI:29985"/>
        <dbReference type="ChEBI" id="CHEBI:30616"/>
        <dbReference type="ChEBI" id="CHEBI:43474"/>
        <dbReference type="ChEBI" id="CHEBI:58402"/>
        <dbReference type="ChEBI" id="CHEBI:456216"/>
        <dbReference type="EC" id="3.5.2.9"/>
    </reaction>
</comment>
<comment type="subunit">
    <text evidence="1">Forms a complex composed of PxpA, PxpB and PxpC.</text>
</comment>
<comment type="similarity">
    <text evidence="1">Belongs to the LamB/PxpA family.</text>
</comment>
<accession>B7JE03</accession>
<dbReference type="EC" id="3.5.2.9" evidence="1"/>
<dbReference type="EMBL" id="CP001283">
    <property type="protein sequence ID" value="ACK87574.1"/>
    <property type="molecule type" value="Genomic_DNA"/>
</dbReference>
<dbReference type="RefSeq" id="WP_000207340.1">
    <property type="nucleotide sequence ID" value="NC_011773.1"/>
</dbReference>
<dbReference type="SMR" id="B7JE03"/>
<dbReference type="KEGG" id="bcu:BCAH820_3100"/>
<dbReference type="HOGENOM" id="CLU_069535_0_0_9"/>
<dbReference type="Proteomes" id="UP000001363">
    <property type="component" value="Chromosome"/>
</dbReference>
<dbReference type="GO" id="GO:0017168">
    <property type="term" value="F:5-oxoprolinase (ATP-hydrolyzing) activity"/>
    <property type="evidence" value="ECO:0007669"/>
    <property type="project" value="UniProtKB-UniRule"/>
</dbReference>
<dbReference type="GO" id="GO:0005524">
    <property type="term" value="F:ATP binding"/>
    <property type="evidence" value="ECO:0007669"/>
    <property type="project" value="UniProtKB-UniRule"/>
</dbReference>
<dbReference type="GO" id="GO:0005975">
    <property type="term" value="P:carbohydrate metabolic process"/>
    <property type="evidence" value="ECO:0007669"/>
    <property type="project" value="InterPro"/>
</dbReference>
<dbReference type="CDD" id="cd10787">
    <property type="entry name" value="LamB_YcsF_like"/>
    <property type="match status" value="1"/>
</dbReference>
<dbReference type="Gene3D" id="3.20.20.370">
    <property type="entry name" value="Glycoside hydrolase/deacetylase"/>
    <property type="match status" value="1"/>
</dbReference>
<dbReference type="HAMAP" id="MF_00691">
    <property type="entry name" value="PxpA"/>
    <property type="match status" value="1"/>
</dbReference>
<dbReference type="InterPro" id="IPR011330">
    <property type="entry name" value="Glyco_hydro/deAcase_b/a-brl"/>
</dbReference>
<dbReference type="InterPro" id="IPR005501">
    <property type="entry name" value="LamB/YcsF/PxpA-like"/>
</dbReference>
<dbReference type="NCBIfam" id="NF003813">
    <property type="entry name" value="PRK05406.1-2"/>
    <property type="match status" value="1"/>
</dbReference>
<dbReference type="NCBIfam" id="NF003814">
    <property type="entry name" value="PRK05406.1-3"/>
    <property type="match status" value="1"/>
</dbReference>
<dbReference type="NCBIfam" id="NF003816">
    <property type="entry name" value="PRK05406.1-5"/>
    <property type="match status" value="1"/>
</dbReference>
<dbReference type="PANTHER" id="PTHR30292:SF0">
    <property type="entry name" value="5-OXOPROLINASE SUBUNIT A"/>
    <property type="match status" value="1"/>
</dbReference>
<dbReference type="PANTHER" id="PTHR30292">
    <property type="entry name" value="UNCHARACTERIZED PROTEIN YBGL-RELATED"/>
    <property type="match status" value="1"/>
</dbReference>
<dbReference type="Pfam" id="PF03746">
    <property type="entry name" value="LamB_YcsF"/>
    <property type="match status" value="1"/>
</dbReference>
<dbReference type="SUPFAM" id="SSF88713">
    <property type="entry name" value="Glycoside hydrolase/deacetylase"/>
    <property type="match status" value="1"/>
</dbReference>
<reference key="1">
    <citation type="submission" date="2008-10" db="EMBL/GenBank/DDBJ databases">
        <title>Genome sequence of Bacillus cereus AH820.</title>
        <authorList>
            <person name="Dodson R.J."/>
            <person name="Durkin A.S."/>
            <person name="Rosovitz M.J."/>
            <person name="Rasko D.A."/>
            <person name="Hoffmaster A."/>
            <person name="Ravel J."/>
            <person name="Sutton G."/>
        </authorList>
    </citation>
    <scope>NUCLEOTIDE SEQUENCE [LARGE SCALE GENOMIC DNA]</scope>
    <source>
        <strain>AH820</strain>
    </source>
</reference>
<keyword id="KW-0067">ATP-binding</keyword>
<keyword id="KW-0378">Hydrolase</keyword>
<keyword id="KW-0547">Nucleotide-binding</keyword>